<proteinExistence type="inferred from homology"/>
<accession>A8ANX1</accession>
<dbReference type="EC" id="1.8.1.2" evidence="1"/>
<dbReference type="EMBL" id="CP000822">
    <property type="protein sequence ID" value="ABV15185.1"/>
    <property type="molecule type" value="Genomic_DNA"/>
</dbReference>
<dbReference type="RefSeq" id="WP_012134873.1">
    <property type="nucleotide sequence ID" value="NC_009792.1"/>
</dbReference>
<dbReference type="SMR" id="A8ANX1"/>
<dbReference type="STRING" id="290338.CKO_04119"/>
<dbReference type="GeneID" id="45137754"/>
<dbReference type="KEGG" id="cko:CKO_04119"/>
<dbReference type="HOGENOM" id="CLU_001570_17_7_6"/>
<dbReference type="OrthoDB" id="9816402at2"/>
<dbReference type="UniPathway" id="UPA00140">
    <property type="reaction ID" value="UER00207"/>
</dbReference>
<dbReference type="Proteomes" id="UP000008148">
    <property type="component" value="Chromosome"/>
</dbReference>
<dbReference type="GO" id="GO:0005829">
    <property type="term" value="C:cytosol"/>
    <property type="evidence" value="ECO:0007669"/>
    <property type="project" value="TreeGrafter"/>
</dbReference>
<dbReference type="GO" id="GO:0050660">
    <property type="term" value="F:flavin adenine dinucleotide binding"/>
    <property type="evidence" value="ECO:0007669"/>
    <property type="project" value="InterPro"/>
</dbReference>
<dbReference type="GO" id="GO:0010181">
    <property type="term" value="F:FMN binding"/>
    <property type="evidence" value="ECO:0007669"/>
    <property type="project" value="InterPro"/>
</dbReference>
<dbReference type="GO" id="GO:0004783">
    <property type="term" value="F:sulfite reductase (NADPH) activity"/>
    <property type="evidence" value="ECO:0007669"/>
    <property type="project" value="UniProtKB-UniRule"/>
</dbReference>
<dbReference type="GO" id="GO:0019344">
    <property type="term" value="P:cysteine biosynthetic process"/>
    <property type="evidence" value="ECO:0007669"/>
    <property type="project" value="UniProtKB-KW"/>
</dbReference>
<dbReference type="GO" id="GO:0070814">
    <property type="term" value="P:hydrogen sulfide biosynthetic process"/>
    <property type="evidence" value="ECO:0007669"/>
    <property type="project" value="UniProtKB-UniRule"/>
</dbReference>
<dbReference type="GO" id="GO:0000103">
    <property type="term" value="P:sulfate assimilation"/>
    <property type="evidence" value="ECO:0007669"/>
    <property type="project" value="UniProtKB-UniRule"/>
</dbReference>
<dbReference type="CDD" id="cd06199">
    <property type="entry name" value="SiR"/>
    <property type="match status" value="1"/>
</dbReference>
<dbReference type="FunFam" id="3.40.50.80:FF:000001">
    <property type="entry name" value="NADPH--cytochrome P450 reductase 1"/>
    <property type="match status" value="1"/>
</dbReference>
<dbReference type="FunFam" id="1.20.990.10:FF:000004">
    <property type="entry name" value="Sulfite reductase [NADPH] flavoprotein alpha-component"/>
    <property type="match status" value="1"/>
</dbReference>
<dbReference type="FunFam" id="3.40.50.360:FF:000018">
    <property type="entry name" value="Sulfite reductase [NADPH] flavoprotein alpha-component"/>
    <property type="match status" value="1"/>
</dbReference>
<dbReference type="Gene3D" id="3.40.50.360">
    <property type="match status" value="1"/>
</dbReference>
<dbReference type="Gene3D" id="1.20.990.10">
    <property type="entry name" value="NADPH-cytochrome p450 Reductase, Chain A, domain 3"/>
    <property type="match status" value="1"/>
</dbReference>
<dbReference type="Gene3D" id="3.40.50.80">
    <property type="entry name" value="Nucleotide-binding domain of ferredoxin-NADP reductase (FNR) module"/>
    <property type="match status" value="1"/>
</dbReference>
<dbReference type="Gene3D" id="2.40.30.10">
    <property type="entry name" value="Translation factors"/>
    <property type="match status" value="1"/>
</dbReference>
<dbReference type="HAMAP" id="MF_01541">
    <property type="entry name" value="CysJ"/>
    <property type="match status" value="1"/>
</dbReference>
<dbReference type="InterPro" id="IPR010199">
    <property type="entry name" value="CysJ"/>
</dbReference>
<dbReference type="InterPro" id="IPR003097">
    <property type="entry name" value="CysJ-like_FAD-binding"/>
</dbReference>
<dbReference type="InterPro" id="IPR029758">
    <property type="entry name" value="CysJ_Proteobact"/>
</dbReference>
<dbReference type="InterPro" id="IPR017927">
    <property type="entry name" value="FAD-bd_FR_type"/>
</dbReference>
<dbReference type="InterPro" id="IPR001094">
    <property type="entry name" value="Flavdoxin-like"/>
</dbReference>
<dbReference type="InterPro" id="IPR008254">
    <property type="entry name" value="Flavodoxin/NO_synth"/>
</dbReference>
<dbReference type="InterPro" id="IPR001709">
    <property type="entry name" value="Flavoprot_Pyr_Nucl_cyt_Rdtase"/>
</dbReference>
<dbReference type="InterPro" id="IPR029039">
    <property type="entry name" value="Flavoprotein-like_sf"/>
</dbReference>
<dbReference type="InterPro" id="IPR039261">
    <property type="entry name" value="FNR_nucleotide-bd"/>
</dbReference>
<dbReference type="InterPro" id="IPR023173">
    <property type="entry name" value="NADPH_Cyt_P450_Rdtase_alpha"/>
</dbReference>
<dbReference type="InterPro" id="IPR001433">
    <property type="entry name" value="OxRdtase_FAD/NAD-bd"/>
</dbReference>
<dbReference type="InterPro" id="IPR017938">
    <property type="entry name" value="Riboflavin_synthase-like_b-brl"/>
</dbReference>
<dbReference type="NCBIfam" id="TIGR01931">
    <property type="entry name" value="cysJ"/>
    <property type="match status" value="1"/>
</dbReference>
<dbReference type="NCBIfam" id="NF004859">
    <property type="entry name" value="PRK06214.1"/>
    <property type="match status" value="1"/>
</dbReference>
<dbReference type="NCBIfam" id="NF008197">
    <property type="entry name" value="PRK10953.1"/>
    <property type="match status" value="1"/>
</dbReference>
<dbReference type="PANTHER" id="PTHR19384:SF128">
    <property type="entry name" value="NADPH OXIDOREDUCTASE A"/>
    <property type="match status" value="1"/>
</dbReference>
<dbReference type="PANTHER" id="PTHR19384">
    <property type="entry name" value="NITRIC OXIDE SYNTHASE-RELATED"/>
    <property type="match status" value="1"/>
</dbReference>
<dbReference type="Pfam" id="PF00667">
    <property type="entry name" value="FAD_binding_1"/>
    <property type="match status" value="1"/>
</dbReference>
<dbReference type="Pfam" id="PF00258">
    <property type="entry name" value="Flavodoxin_1"/>
    <property type="match status" value="1"/>
</dbReference>
<dbReference type="Pfam" id="PF00175">
    <property type="entry name" value="NAD_binding_1"/>
    <property type="match status" value="1"/>
</dbReference>
<dbReference type="PIRSF" id="PIRSF000207">
    <property type="entry name" value="SiR-FP_CysJ"/>
    <property type="match status" value="1"/>
</dbReference>
<dbReference type="PRINTS" id="PR00369">
    <property type="entry name" value="FLAVODOXIN"/>
</dbReference>
<dbReference type="PRINTS" id="PR00371">
    <property type="entry name" value="FPNCR"/>
</dbReference>
<dbReference type="SUPFAM" id="SSF52343">
    <property type="entry name" value="Ferredoxin reductase-like, C-terminal NADP-linked domain"/>
    <property type="match status" value="1"/>
</dbReference>
<dbReference type="SUPFAM" id="SSF52218">
    <property type="entry name" value="Flavoproteins"/>
    <property type="match status" value="1"/>
</dbReference>
<dbReference type="SUPFAM" id="SSF63380">
    <property type="entry name" value="Riboflavin synthase domain-like"/>
    <property type="match status" value="1"/>
</dbReference>
<dbReference type="PROSITE" id="PS51384">
    <property type="entry name" value="FAD_FR"/>
    <property type="match status" value="1"/>
</dbReference>
<dbReference type="PROSITE" id="PS50902">
    <property type="entry name" value="FLAVODOXIN_LIKE"/>
    <property type="match status" value="1"/>
</dbReference>
<protein>
    <recommendedName>
        <fullName evidence="1">Sulfite reductase [NADPH] flavoprotein alpha-component</fullName>
        <shortName evidence="1">SiR-FP</shortName>
        <ecNumber evidence="1">1.8.1.2</ecNumber>
    </recommendedName>
</protein>
<feature type="chain" id="PRO_1000087631" description="Sulfite reductase [NADPH] flavoprotein alpha-component">
    <location>
        <begin position="1"/>
        <end position="601"/>
    </location>
</feature>
<feature type="domain" description="Flavodoxin-like" evidence="1">
    <location>
        <begin position="64"/>
        <end position="202"/>
    </location>
</feature>
<feature type="domain" description="FAD-binding FR-type" evidence="1">
    <location>
        <begin position="236"/>
        <end position="450"/>
    </location>
</feature>
<feature type="binding site" evidence="1">
    <location>
        <begin position="70"/>
        <end position="75"/>
    </location>
    <ligand>
        <name>FMN</name>
        <dbReference type="ChEBI" id="CHEBI:58210"/>
    </ligand>
</feature>
<feature type="binding site" evidence="1">
    <location>
        <begin position="117"/>
        <end position="120"/>
    </location>
    <ligand>
        <name>FMN</name>
        <dbReference type="ChEBI" id="CHEBI:58210"/>
    </ligand>
</feature>
<feature type="binding site" evidence="1">
    <location>
        <begin position="153"/>
        <end position="162"/>
    </location>
    <ligand>
        <name>FMN</name>
        <dbReference type="ChEBI" id="CHEBI:58210"/>
    </ligand>
</feature>
<feature type="binding site" evidence="1">
    <location>
        <position position="324"/>
    </location>
    <ligand>
        <name>FAD</name>
        <dbReference type="ChEBI" id="CHEBI:57692"/>
    </ligand>
</feature>
<feature type="binding site" evidence="1">
    <location>
        <position position="358"/>
    </location>
    <ligand>
        <name>FAD</name>
        <dbReference type="ChEBI" id="CHEBI:57692"/>
    </ligand>
</feature>
<feature type="binding site" evidence="1">
    <location>
        <begin position="388"/>
        <end position="391"/>
    </location>
    <ligand>
        <name>FAD</name>
        <dbReference type="ChEBI" id="CHEBI:57692"/>
    </ligand>
</feature>
<feature type="binding site" evidence="1">
    <location>
        <begin position="406"/>
        <end position="408"/>
    </location>
    <ligand>
        <name>FAD</name>
        <dbReference type="ChEBI" id="CHEBI:57692"/>
    </ligand>
</feature>
<feature type="binding site" evidence="1">
    <location>
        <position position="412"/>
    </location>
    <ligand>
        <name>FAD</name>
        <dbReference type="ChEBI" id="CHEBI:57692"/>
    </ligand>
</feature>
<feature type="binding site" evidence="1">
    <location>
        <begin position="421"/>
        <end position="424"/>
    </location>
    <ligand>
        <name>FAD</name>
        <dbReference type="ChEBI" id="CHEBI:57692"/>
    </ligand>
</feature>
<feature type="binding site" evidence="1">
    <location>
        <begin position="521"/>
        <end position="522"/>
    </location>
    <ligand>
        <name>NADP(+)</name>
        <dbReference type="ChEBI" id="CHEBI:58349"/>
    </ligand>
</feature>
<feature type="binding site" evidence="1">
    <location>
        <begin position="527"/>
        <end position="531"/>
    </location>
    <ligand>
        <name>NADP(+)</name>
        <dbReference type="ChEBI" id="CHEBI:58349"/>
    </ligand>
</feature>
<feature type="binding site" evidence="1">
    <location>
        <position position="563"/>
    </location>
    <ligand>
        <name>NADP(+)</name>
        <dbReference type="ChEBI" id="CHEBI:58349"/>
    </ligand>
</feature>
<feature type="binding site" evidence="1">
    <location>
        <position position="601"/>
    </location>
    <ligand>
        <name>FAD</name>
        <dbReference type="ChEBI" id="CHEBI:57692"/>
    </ligand>
</feature>
<reference key="1">
    <citation type="submission" date="2007-08" db="EMBL/GenBank/DDBJ databases">
        <authorList>
            <consortium name="The Citrobacter koseri Genome Sequencing Project"/>
            <person name="McClelland M."/>
            <person name="Sanderson E.K."/>
            <person name="Porwollik S."/>
            <person name="Spieth J."/>
            <person name="Clifton W.S."/>
            <person name="Latreille P."/>
            <person name="Courtney L."/>
            <person name="Wang C."/>
            <person name="Pepin K."/>
            <person name="Bhonagiri V."/>
            <person name="Nash W."/>
            <person name="Johnson M."/>
            <person name="Thiruvilangam P."/>
            <person name="Wilson R."/>
        </authorList>
    </citation>
    <scope>NUCLEOTIDE SEQUENCE [LARGE SCALE GENOMIC DNA]</scope>
    <source>
        <strain>ATCC BAA-895 / CDC 4225-83 / SGSC4696</strain>
    </source>
</reference>
<organism>
    <name type="scientific">Citrobacter koseri (strain ATCC BAA-895 / CDC 4225-83 / SGSC4696)</name>
    <dbReference type="NCBI Taxonomy" id="290338"/>
    <lineage>
        <taxon>Bacteria</taxon>
        <taxon>Pseudomonadati</taxon>
        <taxon>Pseudomonadota</taxon>
        <taxon>Gammaproteobacteria</taxon>
        <taxon>Enterobacterales</taxon>
        <taxon>Enterobacteriaceae</taxon>
        <taxon>Citrobacter</taxon>
    </lineage>
</organism>
<sequence length="601" mass="66119">MTTQAPPSALLPLNPEQLARLQAATTDLSPTQLAWVSGYFWGMLNQQPGTLAATPAPVAEMPGITLISASQTGNARRVAEALRDDLLAAKLSVTLVNAGDYKFKQIANEKLLVVVASTQGEGEPPEEAVALRKFLFSKKAPKLDNTAFAVFGLGDTSYEFFCQAGKDFDSKLAELGGERLLDRVDADVEYQAAAQEWRARVVDVLKARAPSASAAQVAVAATGAVNDVHSSPYTKEAPLSASLAVNQKITGRDSEKDVRHIEIDLGDSGLRYQPGDALGVWYQNDPELVKEIVELVWLKGTEPVTVNGKVLPLAEALQWHFELTVNTANIVENYATLTRSESLLPLVGDKAQLQHYAATTPIVDMLRFSPAQLDADALVGLLRPLTPRLYSIASSQAEVESEVHITVGAVRYEIEGRARAGGASSFLADRVEEEGEVRVFIEHNDNFRLPANPETPVIMIGPGTGIAPFRAFMQQRAADEAPGKNWLFFGNPHFTEDFLYQVEWQRYVKEGVLSRIDLAWSRDQKEKIYVQDKLREQGAELWRWINDGAHIYVCGDANCMAKDVEQALLEVIAEFGGMDAEAADEFLSELRVERRYQRDVY</sequence>
<name>CYSJ_CITK8</name>
<keyword id="KW-0028">Amino-acid biosynthesis</keyword>
<keyword id="KW-0198">Cysteine biosynthesis</keyword>
<keyword id="KW-0249">Electron transport</keyword>
<keyword id="KW-0274">FAD</keyword>
<keyword id="KW-0285">Flavoprotein</keyword>
<keyword id="KW-0288">FMN</keyword>
<keyword id="KW-0521">NADP</keyword>
<keyword id="KW-0560">Oxidoreductase</keyword>
<keyword id="KW-1185">Reference proteome</keyword>
<keyword id="KW-0813">Transport</keyword>
<comment type="function">
    <text evidence="1">Component of the sulfite reductase complex that catalyzes the 6-electron reduction of sulfite to sulfide. This is one of several activities required for the biosynthesis of L-cysteine from sulfate. The flavoprotein component catalyzes the electron flow from NADPH -&gt; FAD -&gt; FMN to the hemoprotein component.</text>
</comment>
<comment type="catalytic activity">
    <reaction evidence="1">
        <text>hydrogen sulfide + 3 NADP(+) + 3 H2O = sulfite + 3 NADPH + 4 H(+)</text>
        <dbReference type="Rhea" id="RHEA:13801"/>
        <dbReference type="ChEBI" id="CHEBI:15377"/>
        <dbReference type="ChEBI" id="CHEBI:15378"/>
        <dbReference type="ChEBI" id="CHEBI:17359"/>
        <dbReference type="ChEBI" id="CHEBI:29919"/>
        <dbReference type="ChEBI" id="CHEBI:57783"/>
        <dbReference type="ChEBI" id="CHEBI:58349"/>
        <dbReference type="EC" id="1.8.1.2"/>
    </reaction>
</comment>
<comment type="cofactor">
    <cofactor evidence="1">
        <name>FAD</name>
        <dbReference type="ChEBI" id="CHEBI:57692"/>
    </cofactor>
    <text evidence="1">Binds 1 FAD per subunit.</text>
</comment>
<comment type="cofactor">
    <cofactor evidence="1">
        <name>FMN</name>
        <dbReference type="ChEBI" id="CHEBI:58210"/>
    </cofactor>
    <text evidence="1">Binds 1 FMN per subunit.</text>
</comment>
<comment type="pathway">
    <text evidence="1">Sulfur metabolism; hydrogen sulfide biosynthesis; hydrogen sulfide from sulfite (NADPH route): step 1/1.</text>
</comment>
<comment type="subunit">
    <text evidence="1">Alpha(8)-beta(8). The alpha component is a flavoprotein, the beta component is a hemoprotein.</text>
</comment>
<comment type="similarity">
    <text evidence="1">Belongs to the NADPH-dependent sulphite reductase flavoprotein subunit CysJ family.</text>
</comment>
<comment type="similarity">
    <text evidence="1">In the N-terminal section; belongs to the flavodoxin family.</text>
</comment>
<comment type="similarity">
    <text evidence="1">In the C-terminal section; belongs to the flavoprotein pyridine nucleotide cytochrome reductase family.</text>
</comment>
<gene>
    <name evidence="1" type="primary">cysJ</name>
    <name type="ordered locus">CKO_04119</name>
</gene>
<evidence type="ECO:0000255" key="1">
    <source>
        <dbReference type="HAMAP-Rule" id="MF_01541"/>
    </source>
</evidence>